<gene>
    <name type="primary">tbx-34</name>
    <name type="ORF">Y47D3A.10</name>
</gene>
<accession>Q9NAH2</accession>
<keyword id="KW-0238">DNA-binding</keyword>
<keyword id="KW-0539">Nucleus</keyword>
<keyword id="KW-1185">Reference proteome</keyword>
<keyword id="KW-0804">Transcription</keyword>
<keyword id="KW-0805">Transcription regulation</keyword>
<protein>
    <recommendedName>
        <fullName>Putative T-box protein 34</fullName>
    </recommendedName>
</protein>
<dbReference type="EMBL" id="AL117202">
    <property type="protein sequence ID" value="CAB55070.1"/>
    <property type="molecule type" value="Genomic_DNA"/>
</dbReference>
<dbReference type="PIR" id="T31542">
    <property type="entry name" value="T31542"/>
</dbReference>
<dbReference type="RefSeq" id="NP_499441.1">
    <property type="nucleotide sequence ID" value="NM_067040.6"/>
</dbReference>
<dbReference type="SMR" id="Q9NAH2"/>
<dbReference type="BioGRID" id="41732">
    <property type="interactions" value="1"/>
</dbReference>
<dbReference type="FunCoup" id="Q9NAH2">
    <property type="interactions" value="180"/>
</dbReference>
<dbReference type="IntAct" id="Q9NAH2">
    <property type="interactions" value="1"/>
</dbReference>
<dbReference type="STRING" id="6239.Y47D3A.10.1"/>
<dbReference type="PaxDb" id="6239-Y47D3A.10"/>
<dbReference type="EnsemblMetazoa" id="Y47D3A.10.1">
    <property type="protein sequence ID" value="Y47D3A.10.1"/>
    <property type="gene ID" value="WBGene00006553"/>
</dbReference>
<dbReference type="GeneID" id="176549"/>
<dbReference type="KEGG" id="cel:CELE_Y47D3A.10"/>
<dbReference type="UCSC" id="Y47D3A.10">
    <property type="organism name" value="c. elegans"/>
</dbReference>
<dbReference type="AGR" id="WB:WBGene00006553"/>
<dbReference type="CTD" id="176549"/>
<dbReference type="WormBase" id="Y47D3A.10">
    <property type="protein sequence ID" value="CE22040"/>
    <property type="gene ID" value="WBGene00006553"/>
    <property type="gene designation" value="tbx-34"/>
</dbReference>
<dbReference type="eggNOG" id="KOG3585">
    <property type="taxonomic scope" value="Eukaryota"/>
</dbReference>
<dbReference type="GeneTree" id="ENSGT00970000196896"/>
<dbReference type="HOGENOM" id="CLU_922073_0_0_1"/>
<dbReference type="InParanoid" id="Q9NAH2"/>
<dbReference type="OrthoDB" id="5811430at2759"/>
<dbReference type="PhylomeDB" id="Q9NAH2"/>
<dbReference type="SignaLink" id="Q9NAH2"/>
<dbReference type="PRO" id="PR:Q9NAH2"/>
<dbReference type="Proteomes" id="UP000001940">
    <property type="component" value="Chromosome III"/>
</dbReference>
<dbReference type="Bgee" id="WBGene00006553">
    <property type="expression patterns" value="Expressed in material anatomical entity and 2 other cell types or tissues"/>
</dbReference>
<dbReference type="GO" id="GO:0000785">
    <property type="term" value="C:chromatin"/>
    <property type="evidence" value="ECO:0000318"/>
    <property type="project" value="GO_Central"/>
</dbReference>
<dbReference type="GO" id="GO:0005634">
    <property type="term" value="C:nucleus"/>
    <property type="evidence" value="ECO:0000318"/>
    <property type="project" value="GO_Central"/>
</dbReference>
<dbReference type="GO" id="GO:0000981">
    <property type="term" value="F:DNA-binding transcription factor activity, RNA polymerase II-specific"/>
    <property type="evidence" value="ECO:0000318"/>
    <property type="project" value="GO_Central"/>
</dbReference>
<dbReference type="GO" id="GO:0000978">
    <property type="term" value="F:RNA polymerase II cis-regulatory region sequence-specific DNA binding"/>
    <property type="evidence" value="ECO:0000318"/>
    <property type="project" value="GO_Central"/>
</dbReference>
<dbReference type="GO" id="GO:0001708">
    <property type="term" value="P:cell fate specification"/>
    <property type="evidence" value="ECO:0000318"/>
    <property type="project" value="GO_Central"/>
</dbReference>
<dbReference type="GO" id="GO:0045893">
    <property type="term" value="P:positive regulation of DNA-templated transcription"/>
    <property type="evidence" value="ECO:0007669"/>
    <property type="project" value="InterPro"/>
</dbReference>
<dbReference type="GO" id="GO:0006357">
    <property type="term" value="P:regulation of transcription by RNA polymerase II"/>
    <property type="evidence" value="ECO:0000318"/>
    <property type="project" value="GO_Central"/>
</dbReference>
<dbReference type="CDD" id="cd00182">
    <property type="entry name" value="T-box"/>
    <property type="match status" value="1"/>
</dbReference>
<dbReference type="FunFam" id="2.60.40.820:FF:000018">
    <property type="entry name" value="Putative T-box protein 35"/>
    <property type="match status" value="1"/>
</dbReference>
<dbReference type="Gene3D" id="2.60.40.820">
    <property type="entry name" value="Transcription factor, T-box"/>
    <property type="match status" value="1"/>
</dbReference>
<dbReference type="InterPro" id="IPR008967">
    <property type="entry name" value="p53-like_TF_DNA-bd_sf"/>
</dbReference>
<dbReference type="InterPro" id="IPR046360">
    <property type="entry name" value="T-box_DNA-bd"/>
</dbReference>
<dbReference type="InterPro" id="IPR036960">
    <property type="entry name" value="T-box_sf"/>
</dbReference>
<dbReference type="InterPro" id="IPR001699">
    <property type="entry name" value="TF_T-box"/>
</dbReference>
<dbReference type="PANTHER" id="PTHR11267:SF196">
    <property type="entry name" value="T-BOX PROTEIN 30_42-RELATED"/>
    <property type="match status" value="1"/>
</dbReference>
<dbReference type="PANTHER" id="PTHR11267">
    <property type="entry name" value="T-BOX PROTEIN-RELATED"/>
    <property type="match status" value="1"/>
</dbReference>
<dbReference type="Pfam" id="PF00907">
    <property type="entry name" value="T-box"/>
    <property type="match status" value="1"/>
</dbReference>
<dbReference type="PRINTS" id="PR00937">
    <property type="entry name" value="TBOX"/>
</dbReference>
<dbReference type="SMART" id="SM00425">
    <property type="entry name" value="TBOX"/>
    <property type="match status" value="1"/>
</dbReference>
<dbReference type="SUPFAM" id="SSF49417">
    <property type="entry name" value="p53-like transcription factors"/>
    <property type="match status" value="1"/>
</dbReference>
<dbReference type="PROSITE" id="PS50252">
    <property type="entry name" value="TBOX_3"/>
    <property type="match status" value="1"/>
</dbReference>
<comment type="subcellular location">
    <subcellularLocation>
        <location evidence="1">Nucleus</location>
    </subcellularLocation>
</comment>
<feature type="chain" id="PRO_0000184479" description="Putative T-box protein 34">
    <location>
        <begin position="1"/>
        <end position="302"/>
    </location>
</feature>
<feature type="DNA-binding region" description="T-box" evidence="1">
    <location>
        <begin position="5"/>
        <end position="180"/>
    </location>
</feature>
<name>TBX34_CAEEL</name>
<proteinExistence type="inferred from homology"/>
<organism>
    <name type="scientific">Caenorhabditis elegans</name>
    <dbReference type="NCBI Taxonomy" id="6239"/>
    <lineage>
        <taxon>Eukaryota</taxon>
        <taxon>Metazoa</taxon>
        <taxon>Ecdysozoa</taxon>
        <taxon>Nematoda</taxon>
        <taxon>Chromadorea</taxon>
        <taxon>Rhabditida</taxon>
        <taxon>Rhabditina</taxon>
        <taxon>Rhabditomorpha</taxon>
        <taxon>Rhabditoidea</taxon>
        <taxon>Rhabditidae</taxon>
        <taxon>Peloderinae</taxon>
        <taxon>Caenorhabditis</taxon>
    </lineage>
</organism>
<evidence type="ECO:0000255" key="1">
    <source>
        <dbReference type="PROSITE-ProRule" id="PRU00201"/>
    </source>
</evidence>
<reference key="1">
    <citation type="journal article" date="1998" name="Science">
        <title>Genome sequence of the nematode C. elegans: a platform for investigating biology.</title>
        <authorList>
            <consortium name="The C. elegans sequencing consortium"/>
        </authorList>
    </citation>
    <scope>NUCLEOTIDE SEQUENCE [LARGE SCALE GENOMIC DNA]</scope>
    <source>
        <strain>Bristol N2</strain>
    </source>
</reference>
<sequence length="302" mass="35318">MQVSIVNEHKYRELEPLNEMLVKRGGVKMIPEPKFVISGLVDNEEYVIKLRIDLADEFRYSYQNQQWTPFAPSTKNSKLSAITETEHRKETGATWNMRIVQFDKLLITREFNDIQRNVIHVEPNHKYIPVLTIQNVTTGKSTEFQFQQMEFIAVKSYQSARIRHTKRAPRKMNLAPGSSQKPQLIVPDILHSPTYGFTAAPPPFPFEYWLLYPQIQYQIQQLAYSLPMGPPMVPIHHIQCTEASQRVYAPEYGWNSILMPGAHKEQDDHYMFHHEIWAPQDHELEKLHVLTEQKNKPSETPQ</sequence>